<accession>Q8I1G8</accession>
<keyword id="KW-0963">Cytoplasm</keyword>
<keyword id="KW-0396">Initiation factor</keyword>
<keyword id="KW-0648">Protein biosynthesis</keyword>
<comment type="function">
    <text evidence="1">Component of the eukaryotic translation initiation factor 3 (eIF-3) complex, which is involved in protein synthesis of a specialized repertoire of mRNAs and, together with other initiation factors, stimulates binding of mRNA and methionyl-tRNAi to the 40S ribosome. The eIF-3 complex specifically targets and initiates translation of a subset of mRNAs involved in cell proliferation.</text>
</comment>
<comment type="subunit">
    <text evidence="1">Component of the eukaryotic translation initiation factor 3 (eIF-3) complex. The eIF-3 complex interacts with pix.</text>
</comment>
<comment type="subcellular location">
    <subcellularLocation>
        <location evidence="1">Cytoplasm</location>
    </subcellularLocation>
</comment>
<comment type="similarity">
    <text evidence="1">Belongs to the eIF-3 subunit J family.</text>
</comment>
<proteinExistence type="inferred from homology"/>
<organism>
    <name type="scientific">Drosophila erecta</name>
    <name type="common">Fruit fly</name>
    <dbReference type="NCBI Taxonomy" id="7220"/>
    <lineage>
        <taxon>Eukaryota</taxon>
        <taxon>Metazoa</taxon>
        <taxon>Ecdysozoa</taxon>
        <taxon>Arthropoda</taxon>
        <taxon>Hexapoda</taxon>
        <taxon>Insecta</taxon>
        <taxon>Pterygota</taxon>
        <taxon>Neoptera</taxon>
        <taxon>Endopterygota</taxon>
        <taxon>Diptera</taxon>
        <taxon>Brachycera</taxon>
        <taxon>Muscomorpha</taxon>
        <taxon>Ephydroidea</taxon>
        <taxon>Drosophilidae</taxon>
        <taxon>Drosophila</taxon>
        <taxon>Sophophora</taxon>
    </lineage>
</organism>
<gene>
    <name evidence="1" type="primary">eIF3j</name>
    <name evidence="1" type="synonym">Adam</name>
    <name type="ORF">GG24124</name>
</gene>
<protein>
    <recommendedName>
        <fullName evidence="1">Eukaryotic translation initiation factor 3 subunit J</fullName>
        <shortName evidence="1">eIF3j</shortName>
    </recommendedName>
</protein>
<reference key="1">
    <citation type="journal article" date="2002" name="Genome Biol.">
        <title>Assessing the impact of comparative genomic sequence data on the functional annotation of the Drosophila genome.</title>
        <authorList>
            <person name="Bergman C.M."/>
            <person name="Pfeiffer B.D."/>
            <person name="Rincon-Limas D.E."/>
            <person name="Hoskins R.A."/>
            <person name="Gnirke A."/>
            <person name="Mungall C.J."/>
            <person name="Wang A.M."/>
            <person name="Kronmiller B."/>
            <person name="Pacleb J.M."/>
            <person name="Park S."/>
            <person name="Stapleton M."/>
            <person name="Wan K.H."/>
            <person name="George R.A."/>
            <person name="de Jong P.J."/>
            <person name="Botas J."/>
            <person name="Rubin G.M."/>
            <person name="Celniker S.E."/>
        </authorList>
    </citation>
    <scope>NUCLEOTIDE SEQUENCE [GENOMIC DNA]</scope>
</reference>
<reference key="2">
    <citation type="journal article" date="2007" name="Nature">
        <title>Evolution of genes and genomes on the Drosophila phylogeny.</title>
        <authorList>
            <consortium name="Drosophila 12 genomes consortium"/>
        </authorList>
    </citation>
    <scope>NUCLEOTIDE SEQUENCE [LARGE SCALE GENOMIC DNA]</scope>
    <source>
        <strain>Tucson 14021-0224.01</strain>
    </source>
</reference>
<evidence type="ECO:0000255" key="1">
    <source>
        <dbReference type="HAMAP-Rule" id="MF_03009"/>
    </source>
</evidence>
<evidence type="ECO:0000256" key="2">
    <source>
        <dbReference type="SAM" id="MobiDB-lite"/>
    </source>
</evidence>
<sequence>MADDWESAADSEVVIRPTAAASVNKWEGEDEDEDIKDSWEDEEEKKDEEKPTKTEAPAKPKPNKALKAKLEQQARLEEEAEAQRVASLSPAEKLAEKLRLQKIQEASDLKHAQEAFGVTSTCGGLDAFNPESKEEFKEFGATLSWKVAQFRESEHFPQFVEDLVRSLCVNLSAADIKKVKMNVEILHSEKLKLEKANAKKPAGKGKGKVTLRTENDDIDGYQKYGNDFTEDYDDFM</sequence>
<dbReference type="EMBL" id="AY190939">
    <property type="protein sequence ID" value="AAO01001.1"/>
    <property type="molecule type" value="Genomic_DNA"/>
</dbReference>
<dbReference type="EMBL" id="CH954177">
    <property type="protein sequence ID" value="EDV58178.1"/>
    <property type="molecule type" value="Genomic_DNA"/>
</dbReference>
<dbReference type="SMR" id="Q8I1G8"/>
<dbReference type="EnsemblMetazoa" id="FBtr0144178">
    <property type="protein sequence ID" value="FBpp0142670"/>
    <property type="gene ID" value="FBgn0064657"/>
</dbReference>
<dbReference type="EnsemblMetazoa" id="XM_001969083.3">
    <property type="protein sequence ID" value="XP_001969119.1"/>
    <property type="gene ID" value="LOC6541940"/>
</dbReference>
<dbReference type="GeneID" id="6541940"/>
<dbReference type="KEGG" id="der:6541940"/>
<dbReference type="CTD" id="8669"/>
<dbReference type="eggNOG" id="KOG4813">
    <property type="taxonomic scope" value="Eukaryota"/>
</dbReference>
<dbReference type="HOGENOM" id="CLU_085806_2_0_1"/>
<dbReference type="OMA" id="KPHYALW"/>
<dbReference type="OrthoDB" id="20381at2759"/>
<dbReference type="PhylomeDB" id="Q8I1G8"/>
<dbReference type="ChiTaRS" id="Adam">
    <property type="organism name" value="fly"/>
</dbReference>
<dbReference type="Proteomes" id="UP000008711">
    <property type="component" value="Unassembled WGS sequence"/>
</dbReference>
<dbReference type="GO" id="GO:0016282">
    <property type="term" value="C:eukaryotic 43S preinitiation complex"/>
    <property type="evidence" value="ECO:0007669"/>
    <property type="project" value="UniProtKB-UniRule"/>
</dbReference>
<dbReference type="GO" id="GO:0033290">
    <property type="term" value="C:eukaryotic 48S preinitiation complex"/>
    <property type="evidence" value="ECO:0007669"/>
    <property type="project" value="UniProtKB-UniRule"/>
</dbReference>
<dbReference type="GO" id="GO:0005852">
    <property type="term" value="C:eukaryotic translation initiation factor 3 complex"/>
    <property type="evidence" value="ECO:0007669"/>
    <property type="project" value="UniProtKB-UniRule"/>
</dbReference>
<dbReference type="GO" id="GO:0003743">
    <property type="term" value="F:translation initiation factor activity"/>
    <property type="evidence" value="ECO:0007669"/>
    <property type="project" value="UniProtKB-UniRule"/>
</dbReference>
<dbReference type="GO" id="GO:0001732">
    <property type="term" value="P:formation of cytoplasmic translation initiation complex"/>
    <property type="evidence" value="ECO:0007669"/>
    <property type="project" value="UniProtKB-UniRule"/>
</dbReference>
<dbReference type="GO" id="GO:0006446">
    <property type="term" value="P:regulation of translational initiation"/>
    <property type="evidence" value="ECO:0007669"/>
    <property type="project" value="EnsemblMetazoa"/>
</dbReference>
<dbReference type="Gene3D" id="1.10.246.60">
    <property type="entry name" value="Eukaryotic translation initiation factor 3 like domains"/>
    <property type="match status" value="1"/>
</dbReference>
<dbReference type="HAMAP" id="MF_03009">
    <property type="entry name" value="eIF3j"/>
    <property type="match status" value="1"/>
</dbReference>
<dbReference type="InterPro" id="IPR023194">
    <property type="entry name" value="eIF3-like_dom_sf"/>
</dbReference>
<dbReference type="InterPro" id="IPR013906">
    <property type="entry name" value="eIF3j"/>
</dbReference>
<dbReference type="PANTHER" id="PTHR21681">
    <property type="entry name" value="EUKARYOTIC TRANSLATION INITIATION FACTOR 3 SUBUNIT J"/>
    <property type="match status" value="1"/>
</dbReference>
<dbReference type="PANTHER" id="PTHR21681:SF0">
    <property type="entry name" value="EUKARYOTIC TRANSLATION INITIATION FACTOR 3 SUBUNIT J"/>
    <property type="match status" value="1"/>
</dbReference>
<dbReference type="Pfam" id="PF08597">
    <property type="entry name" value="eIF3_subunit"/>
    <property type="match status" value="1"/>
</dbReference>
<name>EIF3J_DROER</name>
<feature type="chain" id="PRO_0000365133" description="Eukaryotic translation initiation factor 3 subunit J">
    <location>
        <begin position="1"/>
        <end position="236"/>
    </location>
</feature>
<feature type="region of interest" description="Disordered" evidence="2">
    <location>
        <begin position="1"/>
        <end position="88"/>
    </location>
</feature>
<feature type="compositionally biased region" description="Acidic residues" evidence="2">
    <location>
        <begin position="28"/>
        <end position="46"/>
    </location>
</feature>
<feature type="compositionally biased region" description="Basic and acidic residues" evidence="2">
    <location>
        <begin position="47"/>
        <end position="58"/>
    </location>
</feature>
<feature type="compositionally biased region" description="Basic and acidic residues" evidence="2">
    <location>
        <begin position="68"/>
        <end position="77"/>
    </location>
</feature>